<keyword id="KW-0997">Cell inner membrane</keyword>
<keyword id="KW-1003">Cell membrane</keyword>
<keyword id="KW-0472">Membrane</keyword>
<keyword id="KW-0520">NAD</keyword>
<keyword id="KW-0874">Quinone</keyword>
<keyword id="KW-1185">Reference proteome</keyword>
<keyword id="KW-1278">Translocase</keyword>
<keyword id="KW-0813">Transport</keyword>
<keyword id="KW-0830">Ubiquinone</keyword>
<name>NUOD_ALBFT</name>
<dbReference type="EC" id="7.1.1.-" evidence="1"/>
<dbReference type="EMBL" id="CP000267">
    <property type="protein sequence ID" value="ABD69229.1"/>
    <property type="molecule type" value="Genomic_DNA"/>
</dbReference>
<dbReference type="RefSeq" id="WP_011463797.1">
    <property type="nucleotide sequence ID" value="NC_007908.1"/>
</dbReference>
<dbReference type="SMR" id="Q21YC4"/>
<dbReference type="STRING" id="338969.Rfer_1496"/>
<dbReference type="KEGG" id="rfr:Rfer_1496"/>
<dbReference type="eggNOG" id="COG0649">
    <property type="taxonomic scope" value="Bacteria"/>
</dbReference>
<dbReference type="HOGENOM" id="CLU_015134_1_1_4"/>
<dbReference type="OrthoDB" id="9801496at2"/>
<dbReference type="Proteomes" id="UP000008332">
    <property type="component" value="Chromosome"/>
</dbReference>
<dbReference type="GO" id="GO:0005886">
    <property type="term" value="C:plasma membrane"/>
    <property type="evidence" value="ECO:0007669"/>
    <property type="project" value="UniProtKB-SubCell"/>
</dbReference>
<dbReference type="GO" id="GO:0051287">
    <property type="term" value="F:NAD binding"/>
    <property type="evidence" value="ECO:0007669"/>
    <property type="project" value="InterPro"/>
</dbReference>
<dbReference type="GO" id="GO:0050136">
    <property type="term" value="F:NADH:ubiquinone reductase (non-electrogenic) activity"/>
    <property type="evidence" value="ECO:0007669"/>
    <property type="project" value="UniProtKB-UniRule"/>
</dbReference>
<dbReference type="GO" id="GO:0048038">
    <property type="term" value="F:quinone binding"/>
    <property type="evidence" value="ECO:0007669"/>
    <property type="project" value="UniProtKB-KW"/>
</dbReference>
<dbReference type="FunFam" id="1.10.645.10:FF:000005">
    <property type="entry name" value="NADH-quinone oxidoreductase subunit D"/>
    <property type="match status" value="1"/>
</dbReference>
<dbReference type="Gene3D" id="1.10.645.10">
    <property type="entry name" value="Cytochrome-c3 Hydrogenase, chain B"/>
    <property type="match status" value="1"/>
</dbReference>
<dbReference type="HAMAP" id="MF_01358">
    <property type="entry name" value="NDH1_NuoD"/>
    <property type="match status" value="1"/>
</dbReference>
<dbReference type="InterPro" id="IPR001135">
    <property type="entry name" value="NADH_Q_OxRdtase_suD"/>
</dbReference>
<dbReference type="InterPro" id="IPR014029">
    <property type="entry name" value="NADH_UbQ_OxRdtase_49kDa_CS"/>
</dbReference>
<dbReference type="InterPro" id="IPR022885">
    <property type="entry name" value="NDH1_su_D/H"/>
</dbReference>
<dbReference type="InterPro" id="IPR029014">
    <property type="entry name" value="NiFe-Hase_large"/>
</dbReference>
<dbReference type="NCBIfam" id="TIGR01962">
    <property type="entry name" value="NuoD"/>
    <property type="match status" value="1"/>
</dbReference>
<dbReference type="NCBIfam" id="NF004739">
    <property type="entry name" value="PRK06075.1"/>
    <property type="match status" value="1"/>
</dbReference>
<dbReference type="PANTHER" id="PTHR11993:SF10">
    <property type="entry name" value="NADH DEHYDROGENASE [UBIQUINONE] IRON-SULFUR PROTEIN 2, MITOCHONDRIAL"/>
    <property type="match status" value="1"/>
</dbReference>
<dbReference type="PANTHER" id="PTHR11993">
    <property type="entry name" value="NADH-UBIQUINONE OXIDOREDUCTASE 49 KDA SUBUNIT"/>
    <property type="match status" value="1"/>
</dbReference>
<dbReference type="Pfam" id="PF00346">
    <property type="entry name" value="Complex1_49kDa"/>
    <property type="match status" value="1"/>
</dbReference>
<dbReference type="SUPFAM" id="SSF56762">
    <property type="entry name" value="HydB/Nqo4-like"/>
    <property type="match status" value="1"/>
</dbReference>
<dbReference type="PROSITE" id="PS00535">
    <property type="entry name" value="COMPLEX1_49K"/>
    <property type="match status" value="1"/>
</dbReference>
<evidence type="ECO:0000255" key="1">
    <source>
        <dbReference type="HAMAP-Rule" id="MF_01358"/>
    </source>
</evidence>
<gene>
    <name evidence="1" type="primary">nuoD</name>
    <name type="ordered locus">Rfer_1496</name>
</gene>
<organism>
    <name type="scientific">Albidiferax ferrireducens (strain ATCC BAA-621 / DSM 15236 / T118)</name>
    <name type="common">Rhodoferax ferrireducens</name>
    <dbReference type="NCBI Taxonomy" id="338969"/>
    <lineage>
        <taxon>Bacteria</taxon>
        <taxon>Pseudomonadati</taxon>
        <taxon>Pseudomonadota</taxon>
        <taxon>Betaproteobacteria</taxon>
        <taxon>Burkholderiales</taxon>
        <taxon>Comamonadaceae</taxon>
        <taxon>Rhodoferax</taxon>
    </lineage>
</organism>
<sequence length="417" mass="47339">MAEIKNYTLNFGPQHPAAHGVLRLVLELDGEVIQRADPHIGLLHRATEKLAETKTYIQALPYMDRLDYMSMMCNESAYCLAVEKMLGLEVPIRAKYIRVMFAEITRLLNHLLCVGAGALDCGAMTVMLYAFREREDLLDMYEAVSGARMHAAYFRPGGVYRDLPDTMARHQPNKIRSAKSTEKLNRNRDGSLLDFIDDFTQRFPTYLGEYHTLLTDNRIWKQRTVGIGVVTAERALNLGFSGPMLRGSGVAWDLRKKQPYEIYDRLDFDIPVGKTGDCYDRYLVRMEEMKQSNRIIKQCVDWLRVNPGPVITDNHKIAPPNRESMKSNMEELIHHFKLFSEGFSVPEGEAYATIEHPKGEFGIYMVSDGANKPYRMKIRPPAFVHLAALGEMGRGHMIGDAVAIIGSLDIVFGEVDR</sequence>
<accession>Q21YC4</accession>
<feature type="chain" id="PRO_0000357902" description="NADH-quinone oxidoreductase subunit D">
    <location>
        <begin position="1"/>
        <end position="417"/>
    </location>
</feature>
<protein>
    <recommendedName>
        <fullName evidence="1">NADH-quinone oxidoreductase subunit D</fullName>
        <ecNumber evidence="1">7.1.1.-</ecNumber>
    </recommendedName>
    <alternativeName>
        <fullName evidence="1">NADH dehydrogenase I subunit D</fullName>
    </alternativeName>
    <alternativeName>
        <fullName evidence="1">NDH-1 subunit D</fullName>
    </alternativeName>
</protein>
<comment type="function">
    <text evidence="1">NDH-1 shuttles electrons from NADH, via FMN and iron-sulfur (Fe-S) centers, to quinones in the respiratory chain. The immediate electron acceptor for the enzyme in this species is believed to be ubiquinone. Couples the redox reaction to proton translocation (for every two electrons transferred, four hydrogen ions are translocated across the cytoplasmic membrane), and thus conserves the redox energy in a proton gradient.</text>
</comment>
<comment type="catalytic activity">
    <reaction evidence="1">
        <text>a quinone + NADH + 5 H(+)(in) = a quinol + NAD(+) + 4 H(+)(out)</text>
        <dbReference type="Rhea" id="RHEA:57888"/>
        <dbReference type="ChEBI" id="CHEBI:15378"/>
        <dbReference type="ChEBI" id="CHEBI:24646"/>
        <dbReference type="ChEBI" id="CHEBI:57540"/>
        <dbReference type="ChEBI" id="CHEBI:57945"/>
        <dbReference type="ChEBI" id="CHEBI:132124"/>
    </reaction>
</comment>
<comment type="subunit">
    <text evidence="1">NDH-1 is composed of 14 different subunits. Subunits NuoB, C, D, E, F, and G constitute the peripheral sector of the complex.</text>
</comment>
<comment type="subcellular location">
    <subcellularLocation>
        <location evidence="1">Cell inner membrane</location>
        <topology evidence="1">Peripheral membrane protein</topology>
        <orientation evidence="1">Cytoplasmic side</orientation>
    </subcellularLocation>
</comment>
<comment type="similarity">
    <text evidence="1">Belongs to the complex I 49 kDa subunit family.</text>
</comment>
<proteinExistence type="inferred from homology"/>
<reference key="1">
    <citation type="submission" date="2006-02" db="EMBL/GenBank/DDBJ databases">
        <title>Complete sequence of chromosome of Rhodoferax ferrireducens DSM 15236.</title>
        <authorList>
            <person name="Copeland A."/>
            <person name="Lucas S."/>
            <person name="Lapidus A."/>
            <person name="Barry K."/>
            <person name="Detter J.C."/>
            <person name="Glavina del Rio T."/>
            <person name="Hammon N."/>
            <person name="Israni S."/>
            <person name="Pitluck S."/>
            <person name="Brettin T."/>
            <person name="Bruce D."/>
            <person name="Han C."/>
            <person name="Tapia R."/>
            <person name="Gilna P."/>
            <person name="Kiss H."/>
            <person name="Schmutz J."/>
            <person name="Larimer F."/>
            <person name="Land M."/>
            <person name="Kyrpides N."/>
            <person name="Ivanova N."/>
            <person name="Richardson P."/>
        </authorList>
    </citation>
    <scope>NUCLEOTIDE SEQUENCE [LARGE SCALE GENOMIC DNA]</scope>
    <source>
        <strain>ATCC BAA-621 / DSM 15236 / T118</strain>
    </source>
</reference>